<sequence length="202" mass="22232">MMIIVMLLLSYLIGAFPSGFVIGKLFFKKDIRQFGSGNTGATNSFRVLGRPAGFLVTFLDIFKGFITVFFPLWLPVHADGPISTFFTNGLIVGLFAILGHVYPVYLKFQGGKAVATSAGVVLGVNPILLLILAIIFFIVLKIFKYVSLASIVAAICCVIGSLIIQDYILLVVSFLVSIILIIRHRSNIARIFRGEEPKIKWM</sequence>
<proteinExistence type="inferred from homology"/>
<accession>P67164</accession>
<accession>Q99UC5</accession>
<comment type="function">
    <text evidence="1">Catalyzes the transfer of an acyl group from acyl-phosphate (acyl-PO(4)) to glycerol-3-phosphate (G3P) to form lysophosphatidic acid (LPA). This enzyme utilizes acyl-phosphate as fatty acyl donor, but not acyl-CoA or acyl-ACP.</text>
</comment>
<comment type="catalytic activity">
    <reaction evidence="1">
        <text>an acyl phosphate + sn-glycerol 3-phosphate = a 1-acyl-sn-glycero-3-phosphate + phosphate</text>
        <dbReference type="Rhea" id="RHEA:34075"/>
        <dbReference type="ChEBI" id="CHEBI:43474"/>
        <dbReference type="ChEBI" id="CHEBI:57597"/>
        <dbReference type="ChEBI" id="CHEBI:57970"/>
        <dbReference type="ChEBI" id="CHEBI:59918"/>
        <dbReference type="EC" id="2.3.1.275"/>
    </reaction>
</comment>
<comment type="pathway">
    <text evidence="1">Lipid metabolism; phospholipid metabolism.</text>
</comment>
<comment type="subunit">
    <text evidence="1">Probably interacts with PlsX.</text>
</comment>
<comment type="subcellular location">
    <subcellularLocation>
        <location evidence="1">Cell membrane</location>
        <topology evidence="1">Multi-pass membrane protein</topology>
    </subcellularLocation>
</comment>
<comment type="similarity">
    <text evidence="1">Belongs to the PlsY family.</text>
</comment>
<evidence type="ECO:0000255" key="1">
    <source>
        <dbReference type="HAMAP-Rule" id="MF_01043"/>
    </source>
</evidence>
<keyword id="KW-1003">Cell membrane</keyword>
<keyword id="KW-0444">Lipid biosynthesis</keyword>
<keyword id="KW-0443">Lipid metabolism</keyword>
<keyword id="KW-0472">Membrane</keyword>
<keyword id="KW-0594">Phospholipid biosynthesis</keyword>
<keyword id="KW-1208">Phospholipid metabolism</keyword>
<keyword id="KW-0808">Transferase</keyword>
<keyword id="KW-0812">Transmembrane</keyword>
<keyword id="KW-1133">Transmembrane helix</keyword>
<organism>
    <name type="scientific">Staphylococcus aureus (strain N315)</name>
    <dbReference type="NCBI Taxonomy" id="158879"/>
    <lineage>
        <taxon>Bacteria</taxon>
        <taxon>Bacillati</taxon>
        <taxon>Bacillota</taxon>
        <taxon>Bacilli</taxon>
        <taxon>Bacillales</taxon>
        <taxon>Staphylococcaceae</taxon>
        <taxon>Staphylococcus</taxon>
    </lineage>
</organism>
<protein>
    <recommendedName>
        <fullName evidence="1">Glycerol-3-phosphate acyltransferase</fullName>
    </recommendedName>
    <alternativeName>
        <fullName evidence="1">Acyl-PO4 G3P acyltransferase</fullName>
    </alternativeName>
    <alternativeName>
        <fullName evidence="1">Acyl-phosphate--glycerol-3-phosphate acyltransferase</fullName>
    </alternativeName>
    <alternativeName>
        <fullName evidence="1">G3P acyltransferase</fullName>
        <shortName evidence="1">GPAT</shortName>
        <ecNumber evidence="1">2.3.1.275</ecNumber>
    </alternativeName>
    <alternativeName>
        <fullName evidence="1">Lysophosphatidic acid synthase</fullName>
        <shortName evidence="1">LPA synthase</shortName>
    </alternativeName>
</protein>
<reference key="1">
    <citation type="journal article" date="2001" name="Lancet">
        <title>Whole genome sequencing of meticillin-resistant Staphylococcus aureus.</title>
        <authorList>
            <person name="Kuroda M."/>
            <person name="Ohta T."/>
            <person name="Uchiyama I."/>
            <person name="Baba T."/>
            <person name="Yuzawa H."/>
            <person name="Kobayashi I."/>
            <person name="Cui L."/>
            <person name="Oguchi A."/>
            <person name="Aoki K."/>
            <person name="Nagai Y."/>
            <person name="Lian J.-Q."/>
            <person name="Ito T."/>
            <person name="Kanamori M."/>
            <person name="Matsumaru H."/>
            <person name="Maruyama A."/>
            <person name="Murakami H."/>
            <person name="Hosoyama A."/>
            <person name="Mizutani-Ui Y."/>
            <person name="Takahashi N.K."/>
            <person name="Sawano T."/>
            <person name="Inoue R."/>
            <person name="Kaito C."/>
            <person name="Sekimizu K."/>
            <person name="Hirakawa H."/>
            <person name="Kuhara S."/>
            <person name="Goto S."/>
            <person name="Yabuzaki J."/>
            <person name="Kanehisa M."/>
            <person name="Yamashita A."/>
            <person name="Oshima K."/>
            <person name="Furuya K."/>
            <person name="Yoshino C."/>
            <person name="Shiba T."/>
            <person name="Hattori M."/>
            <person name="Ogasawara N."/>
            <person name="Hayashi H."/>
            <person name="Hiramatsu K."/>
        </authorList>
    </citation>
    <scope>NUCLEOTIDE SEQUENCE [LARGE SCALE GENOMIC DNA]</scope>
    <source>
        <strain>N315</strain>
    </source>
</reference>
<name>PLSY_STAAN</name>
<feature type="chain" id="PRO_0000188454" description="Glycerol-3-phosphate acyltransferase">
    <location>
        <begin position="1"/>
        <end position="202"/>
    </location>
</feature>
<feature type="transmembrane region" description="Helical" evidence="1">
    <location>
        <begin position="2"/>
        <end position="22"/>
    </location>
</feature>
<feature type="transmembrane region" description="Helical" evidence="1">
    <location>
        <begin position="54"/>
        <end position="74"/>
    </location>
</feature>
<feature type="transmembrane region" description="Helical" evidence="1">
    <location>
        <begin position="85"/>
        <end position="105"/>
    </location>
</feature>
<feature type="transmembrane region" description="Helical" evidence="1">
    <location>
        <begin position="120"/>
        <end position="140"/>
    </location>
</feature>
<feature type="transmembrane region" description="Helical" evidence="1">
    <location>
        <begin position="141"/>
        <end position="161"/>
    </location>
</feature>
<feature type="transmembrane region" description="Helical" evidence="1">
    <location>
        <begin position="162"/>
        <end position="182"/>
    </location>
</feature>
<dbReference type="EC" id="2.3.1.275" evidence="1"/>
<dbReference type="EMBL" id="BA000018">
    <property type="protein sequence ID" value="BAB42445.1"/>
    <property type="molecule type" value="Genomic_DNA"/>
</dbReference>
<dbReference type="PIR" id="A89911">
    <property type="entry name" value="A89911"/>
</dbReference>
<dbReference type="RefSeq" id="WP_000972779.1">
    <property type="nucleotide sequence ID" value="NC_002745.2"/>
</dbReference>
<dbReference type="SMR" id="P67164"/>
<dbReference type="EnsemblBacteria" id="BAB42445">
    <property type="protein sequence ID" value="BAB42445"/>
    <property type="gene ID" value="BAB42445"/>
</dbReference>
<dbReference type="KEGG" id="sau:SA1187"/>
<dbReference type="HOGENOM" id="CLU_081254_4_0_9"/>
<dbReference type="UniPathway" id="UPA00085"/>
<dbReference type="GO" id="GO:0005886">
    <property type="term" value="C:plasma membrane"/>
    <property type="evidence" value="ECO:0007669"/>
    <property type="project" value="UniProtKB-SubCell"/>
</dbReference>
<dbReference type="GO" id="GO:0043772">
    <property type="term" value="F:acyl-phosphate glycerol-3-phosphate acyltransferase activity"/>
    <property type="evidence" value="ECO:0007669"/>
    <property type="project" value="UniProtKB-UniRule"/>
</dbReference>
<dbReference type="GO" id="GO:0008654">
    <property type="term" value="P:phospholipid biosynthetic process"/>
    <property type="evidence" value="ECO:0007669"/>
    <property type="project" value="UniProtKB-UniRule"/>
</dbReference>
<dbReference type="HAMAP" id="MF_01043">
    <property type="entry name" value="PlsY"/>
    <property type="match status" value="1"/>
</dbReference>
<dbReference type="InterPro" id="IPR003811">
    <property type="entry name" value="G3P_acylTferase_PlsY"/>
</dbReference>
<dbReference type="NCBIfam" id="TIGR00023">
    <property type="entry name" value="glycerol-3-phosphate 1-O-acyltransferase PlsY"/>
    <property type="match status" value="1"/>
</dbReference>
<dbReference type="PANTHER" id="PTHR30309:SF0">
    <property type="entry name" value="GLYCEROL-3-PHOSPHATE ACYLTRANSFERASE-RELATED"/>
    <property type="match status" value="1"/>
</dbReference>
<dbReference type="PANTHER" id="PTHR30309">
    <property type="entry name" value="INNER MEMBRANE PROTEIN YGIH"/>
    <property type="match status" value="1"/>
</dbReference>
<dbReference type="Pfam" id="PF02660">
    <property type="entry name" value="G3P_acyltransf"/>
    <property type="match status" value="1"/>
</dbReference>
<dbReference type="SMART" id="SM01207">
    <property type="entry name" value="G3P_acyltransf"/>
    <property type="match status" value="1"/>
</dbReference>
<gene>
    <name evidence="1" type="primary">plsY</name>
    <name type="ordered locus">SA1187</name>
</gene>